<name>RS7_STAAR</name>
<protein>
    <recommendedName>
        <fullName evidence="1">Small ribosomal subunit protein uS7</fullName>
    </recommendedName>
    <alternativeName>
        <fullName evidence="2">30S ribosomal protein S7</fullName>
    </alternativeName>
</protein>
<sequence>MPRKGSVPKRDVLPDPIHNSKLVTKLINKIMLDGKRGTAQRILYSAFDLVEQRSGRDALEVFEEAINNIMPVLEVKARRVGGSNYQVPVEVRPERRTTLGLRWLVNYARLRGEKTMEDRLANEILDAANNTGGAVKKREDTHKMAEANKAFAHYRW</sequence>
<keyword id="KW-0687">Ribonucleoprotein</keyword>
<keyword id="KW-0689">Ribosomal protein</keyword>
<keyword id="KW-0694">RNA-binding</keyword>
<keyword id="KW-0699">rRNA-binding</keyword>
<keyword id="KW-0820">tRNA-binding</keyword>
<accession>Q6GJC2</accession>
<organism>
    <name type="scientific">Staphylococcus aureus (strain MRSA252)</name>
    <dbReference type="NCBI Taxonomy" id="282458"/>
    <lineage>
        <taxon>Bacteria</taxon>
        <taxon>Bacillati</taxon>
        <taxon>Bacillota</taxon>
        <taxon>Bacilli</taxon>
        <taxon>Bacillales</taxon>
        <taxon>Staphylococcaceae</taxon>
        <taxon>Staphylococcus</taxon>
    </lineage>
</organism>
<evidence type="ECO:0000255" key="1">
    <source>
        <dbReference type="HAMAP-Rule" id="MF_00480"/>
    </source>
</evidence>
<evidence type="ECO:0000305" key="2"/>
<proteinExistence type="inferred from homology"/>
<feature type="chain" id="PRO_0000124344" description="Small ribosomal subunit protein uS7">
    <location>
        <begin position="1"/>
        <end position="156"/>
    </location>
</feature>
<comment type="function">
    <text evidence="1">One of the primary rRNA binding proteins, it binds directly to 16S rRNA where it nucleates assembly of the head domain of the 30S subunit. Is located at the subunit interface close to the decoding center, probably blocks exit of the E-site tRNA.</text>
</comment>
<comment type="subunit">
    <text evidence="1">Part of the 30S ribosomal subunit. Contacts proteins S9 and S11.</text>
</comment>
<comment type="similarity">
    <text evidence="1">Belongs to the universal ribosomal protein uS7 family.</text>
</comment>
<reference key="1">
    <citation type="journal article" date="2004" name="Proc. Natl. Acad. Sci. U.S.A.">
        <title>Complete genomes of two clinical Staphylococcus aureus strains: evidence for the rapid evolution of virulence and drug resistance.</title>
        <authorList>
            <person name="Holden M.T.G."/>
            <person name="Feil E.J."/>
            <person name="Lindsay J.A."/>
            <person name="Peacock S.J."/>
            <person name="Day N.P.J."/>
            <person name="Enright M.C."/>
            <person name="Foster T.J."/>
            <person name="Moore C.E."/>
            <person name="Hurst L."/>
            <person name="Atkin R."/>
            <person name="Barron A."/>
            <person name="Bason N."/>
            <person name="Bentley S.D."/>
            <person name="Chillingworth C."/>
            <person name="Chillingworth T."/>
            <person name="Churcher C."/>
            <person name="Clark L."/>
            <person name="Corton C."/>
            <person name="Cronin A."/>
            <person name="Doggett J."/>
            <person name="Dowd L."/>
            <person name="Feltwell T."/>
            <person name="Hance Z."/>
            <person name="Harris B."/>
            <person name="Hauser H."/>
            <person name="Holroyd S."/>
            <person name="Jagels K."/>
            <person name="James K.D."/>
            <person name="Lennard N."/>
            <person name="Line A."/>
            <person name="Mayes R."/>
            <person name="Moule S."/>
            <person name="Mungall K."/>
            <person name="Ormond D."/>
            <person name="Quail M.A."/>
            <person name="Rabbinowitsch E."/>
            <person name="Rutherford K.M."/>
            <person name="Sanders M."/>
            <person name="Sharp S."/>
            <person name="Simmonds M."/>
            <person name="Stevens K."/>
            <person name="Whitehead S."/>
            <person name="Barrell B.G."/>
            <person name="Spratt B.G."/>
            <person name="Parkhill J."/>
        </authorList>
    </citation>
    <scope>NUCLEOTIDE SEQUENCE [LARGE SCALE GENOMIC DNA]</scope>
    <source>
        <strain>MRSA252</strain>
    </source>
</reference>
<gene>
    <name evidence="1" type="primary">rpsG</name>
    <name type="ordered locus">SAR0551</name>
</gene>
<dbReference type="EMBL" id="BX571856">
    <property type="protein sequence ID" value="CAG39572.1"/>
    <property type="molecule type" value="Genomic_DNA"/>
</dbReference>
<dbReference type="RefSeq" id="WP_001137495.1">
    <property type="nucleotide sequence ID" value="NC_002952.2"/>
</dbReference>
<dbReference type="SMR" id="Q6GJC2"/>
<dbReference type="GeneID" id="98344880"/>
<dbReference type="KEGG" id="sar:SAR0551"/>
<dbReference type="HOGENOM" id="CLU_072226_1_1_9"/>
<dbReference type="Proteomes" id="UP000000596">
    <property type="component" value="Chromosome"/>
</dbReference>
<dbReference type="GO" id="GO:0015935">
    <property type="term" value="C:small ribosomal subunit"/>
    <property type="evidence" value="ECO:0007669"/>
    <property type="project" value="InterPro"/>
</dbReference>
<dbReference type="GO" id="GO:0019843">
    <property type="term" value="F:rRNA binding"/>
    <property type="evidence" value="ECO:0007669"/>
    <property type="project" value="UniProtKB-UniRule"/>
</dbReference>
<dbReference type="GO" id="GO:0003735">
    <property type="term" value="F:structural constituent of ribosome"/>
    <property type="evidence" value="ECO:0007669"/>
    <property type="project" value="InterPro"/>
</dbReference>
<dbReference type="GO" id="GO:0000049">
    <property type="term" value="F:tRNA binding"/>
    <property type="evidence" value="ECO:0007669"/>
    <property type="project" value="UniProtKB-UniRule"/>
</dbReference>
<dbReference type="GO" id="GO:0006412">
    <property type="term" value="P:translation"/>
    <property type="evidence" value="ECO:0007669"/>
    <property type="project" value="UniProtKB-UniRule"/>
</dbReference>
<dbReference type="CDD" id="cd14869">
    <property type="entry name" value="uS7_Bacteria"/>
    <property type="match status" value="1"/>
</dbReference>
<dbReference type="FunFam" id="1.10.455.10:FF:000001">
    <property type="entry name" value="30S ribosomal protein S7"/>
    <property type="match status" value="1"/>
</dbReference>
<dbReference type="Gene3D" id="1.10.455.10">
    <property type="entry name" value="Ribosomal protein S7 domain"/>
    <property type="match status" value="1"/>
</dbReference>
<dbReference type="HAMAP" id="MF_00480_B">
    <property type="entry name" value="Ribosomal_uS7_B"/>
    <property type="match status" value="1"/>
</dbReference>
<dbReference type="InterPro" id="IPR000235">
    <property type="entry name" value="Ribosomal_uS7"/>
</dbReference>
<dbReference type="InterPro" id="IPR005717">
    <property type="entry name" value="Ribosomal_uS7_bac/org-type"/>
</dbReference>
<dbReference type="InterPro" id="IPR020606">
    <property type="entry name" value="Ribosomal_uS7_CS"/>
</dbReference>
<dbReference type="InterPro" id="IPR023798">
    <property type="entry name" value="Ribosomal_uS7_dom"/>
</dbReference>
<dbReference type="InterPro" id="IPR036823">
    <property type="entry name" value="Ribosomal_uS7_dom_sf"/>
</dbReference>
<dbReference type="NCBIfam" id="TIGR01029">
    <property type="entry name" value="rpsG_bact"/>
    <property type="match status" value="1"/>
</dbReference>
<dbReference type="PANTHER" id="PTHR11205">
    <property type="entry name" value="RIBOSOMAL PROTEIN S7"/>
    <property type="match status" value="1"/>
</dbReference>
<dbReference type="Pfam" id="PF00177">
    <property type="entry name" value="Ribosomal_S7"/>
    <property type="match status" value="1"/>
</dbReference>
<dbReference type="PIRSF" id="PIRSF002122">
    <property type="entry name" value="RPS7p_RPS7a_RPS5e_RPS7o"/>
    <property type="match status" value="1"/>
</dbReference>
<dbReference type="SUPFAM" id="SSF47973">
    <property type="entry name" value="Ribosomal protein S7"/>
    <property type="match status" value="1"/>
</dbReference>
<dbReference type="PROSITE" id="PS00052">
    <property type="entry name" value="RIBOSOMAL_S7"/>
    <property type="match status" value="1"/>
</dbReference>